<accession>E1BPQ3</accession>
<name>GPC6A_BOVIN</name>
<feature type="signal peptide" evidence="2">
    <location>
        <begin position="1"/>
        <end position="15"/>
    </location>
</feature>
<feature type="chain" id="PRO_0000403981" description="G-protein coupled receptor family C group 6 member A">
    <location>
        <begin position="16"/>
        <end position="888"/>
    </location>
</feature>
<feature type="topological domain" description="Extracellular" evidence="2">
    <location>
        <begin position="16"/>
        <end position="568"/>
    </location>
</feature>
<feature type="transmembrane region" description="Helical; Name=1" evidence="2">
    <location>
        <begin position="569"/>
        <end position="589"/>
    </location>
</feature>
<feature type="topological domain" description="Cytoplasmic" evidence="2">
    <location>
        <begin position="590"/>
        <end position="604"/>
    </location>
</feature>
<feature type="transmembrane region" description="Helical; Name=2" evidence="2">
    <location>
        <begin position="605"/>
        <end position="625"/>
    </location>
</feature>
<feature type="topological domain" description="Extracellular" evidence="2">
    <location>
        <begin position="626"/>
        <end position="641"/>
    </location>
</feature>
<feature type="transmembrane region" description="Helical; Name=3" evidence="2">
    <location>
        <begin position="642"/>
        <end position="662"/>
    </location>
</feature>
<feature type="topological domain" description="Cytoplasmic" evidence="2">
    <location>
        <begin position="663"/>
        <end position="676"/>
    </location>
</feature>
<feature type="transmembrane region" description="Helical; Name=4" evidence="2">
    <location>
        <begin position="677"/>
        <end position="697"/>
    </location>
</feature>
<feature type="topological domain" description="Extracellular" evidence="2">
    <location>
        <begin position="698"/>
        <end position="718"/>
    </location>
</feature>
<feature type="transmembrane region" description="Helical; Name=5" evidence="2">
    <location>
        <begin position="719"/>
        <end position="739"/>
    </location>
</feature>
<feature type="topological domain" description="Cytoplasmic" evidence="2">
    <location>
        <begin position="740"/>
        <end position="754"/>
    </location>
</feature>
<feature type="transmembrane region" description="Helical; Name=6" evidence="2">
    <location>
        <begin position="755"/>
        <end position="775"/>
    </location>
</feature>
<feature type="topological domain" description="Extracellular" evidence="2">
    <location>
        <begin position="776"/>
        <end position="779"/>
    </location>
</feature>
<feature type="transmembrane region" description="Helical; Name=7" evidence="2">
    <location>
        <begin position="780"/>
        <end position="800"/>
    </location>
</feature>
<feature type="topological domain" description="Cytoplasmic" evidence="2">
    <location>
        <begin position="801"/>
        <end position="888"/>
    </location>
</feature>
<feature type="glycosylation site" description="N-linked (GlcNAc...) asparagine" evidence="2">
    <location>
        <position position="251"/>
    </location>
</feature>
<feature type="glycosylation site" description="N-linked (GlcNAc...) asparagine" evidence="2">
    <location>
        <position position="322"/>
    </location>
</feature>
<feature type="glycosylation site" description="N-linked (GlcNAc...) asparagine" evidence="2">
    <location>
        <position position="532"/>
    </location>
</feature>
<feature type="glycosylation site" description="N-linked (GlcNAc...) asparagine" evidence="2">
    <location>
        <position position="544"/>
    </location>
</feature>
<feature type="disulfide bond" description="Interchain" evidence="3">
    <location>
        <position position="127"/>
    </location>
</feature>
<protein>
    <recommendedName>
        <fullName>G-protein coupled receptor family C group 6 member A</fullName>
    </recommendedName>
</protein>
<organism>
    <name type="scientific">Bos taurus</name>
    <name type="common">Bovine</name>
    <dbReference type="NCBI Taxonomy" id="9913"/>
    <lineage>
        <taxon>Eukaryota</taxon>
        <taxon>Metazoa</taxon>
        <taxon>Chordata</taxon>
        <taxon>Craniata</taxon>
        <taxon>Vertebrata</taxon>
        <taxon>Euteleostomi</taxon>
        <taxon>Mammalia</taxon>
        <taxon>Eutheria</taxon>
        <taxon>Laurasiatheria</taxon>
        <taxon>Artiodactyla</taxon>
        <taxon>Ruminantia</taxon>
        <taxon>Pecora</taxon>
        <taxon>Bovidae</taxon>
        <taxon>Bovinae</taxon>
        <taxon>Bos</taxon>
    </lineage>
</organism>
<gene>
    <name type="primary">GPRC6A</name>
</gene>
<dbReference type="EMBL" id="AAFC03094794">
    <property type="status" value="NOT_ANNOTATED_CDS"/>
    <property type="molecule type" value="Genomic_DNA"/>
</dbReference>
<dbReference type="EMBL" id="AAFC03122240">
    <property type="status" value="NOT_ANNOTATED_CDS"/>
    <property type="molecule type" value="Genomic_DNA"/>
</dbReference>
<dbReference type="SMR" id="E1BPQ3"/>
<dbReference type="FunCoup" id="E1BPQ3">
    <property type="interactions" value="104"/>
</dbReference>
<dbReference type="GlyCosmos" id="E1BPQ3">
    <property type="glycosylation" value="4 sites, No reported glycans"/>
</dbReference>
<dbReference type="GlyGen" id="E1BPQ3">
    <property type="glycosylation" value="4 sites"/>
</dbReference>
<dbReference type="InParanoid" id="E1BPQ3"/>
<dbReference type="Proteomes" id="UP000009136">
    <property type="component" value="Unplaced"/>
</dbReference>
<dbReference type="GO" id="GO:0005886">
    <property type="term" value="C:plasma membrane"/>
    <property type="evidence" value="ECO:0000250"/>
    <property type="project" value="UniProtKB"/>
</dbReference>
<dbReference type="GO" id="GO:0004930">
    <property type="term" value="F:G protein-coupled receptor activity"/>
    <property type="evidence" value="ECO:0000250"/>
    <property type="project" value="UniProtKB"/>
</dbReference>
<dbReference type="GO" id="GO:2000224">
    <property type="term" value="P:regulation of testosterone biosynthetic process"/>
    <property type="evidence" value="ECO:0000250"/>
    <property type="project" value="UniProtKB"/>
</dbReference>
<dbReference type="FunFam" id="3.40.50.2300:FF:000152">
    <property type="entry name" value="G protein-coupled receptor class C group 6 member A"/>
    <property type="match status" value="1"/>
</dbReference>
<dbReference type="FunFam" id="2.10.50.30:FF:000004">
    <property type="entry name" value="Taste receptor type 1 member 3-like protein"/>
    <property type="match status" value="1"/>
</dbReference>
<dbReference type="Gene3D" id="3.40.50.2300">
    <property type="match status" value="2"/>
</dbReference>
<dbReference type="Gene3D" id="2.10.50.30">
    <property type="entry name" value="GPCR, family 3, nine cysteines domain"/>
    <property type="match status" value="1"/>
</dbReference>
<dbReference type="InterPro" id="IPR001828">
    <property type="entry name" value="ANF_lig-bd_rcpt"/>
</dbReference>
<dbReference type="InterPro" id="IPR000337">
    <property type="entry name" value="GPCR_3"/>
</dbReference>
<dbReference type="InterPro" id="IPR011500">
    <property type="entry name" value="GPCR_3_9-Cys_dom"/>
</dbReference>
<dbReference type="InterPro" id="IPR038550">
    <property type="entry name" value="GPCR_3_9-Cys_sf"/>
</dbReference>
<dbReference type="InterPro" id="IPR017978">
    <property type="entry name" value="GPCR_3_C"/>
</dbReference>
<dbReference type="InterPro" id="IPR000068">
    <property type="entry name" value="GPCR_3_Ca_sens_rcpt-rel"/>
</dbReference>
<dbReference type="InterPro" id="IPR004073">
    <property type="entry name" value="GPCR_3_vmron_rcpt_2"/>
</dbReference>
<dbReference type="InterPro" id="IPR028082">
    <property type="entry name" value="Peripla_BP_I"/>
</dbReference>
<dbReference type="PANTHER" id="PTHR24061">
    <property type="entry name" value="CALCIUM-SENSING RECEPTOR-RELATED"/>
    <property type="match status" value="1"/>
</dbReference>
<dbReference type="PANTHER" id="PTHR24061:SF5">
    <property type="entry name" value="G-PROTEIN COUPLED RECEPTOR FAMILY C GROUP 6 MEMBER A"/>
    <property type="match status" value="1"/>
</dbReference>
<dbReference type="Pfam" id="PF00003">
    <property type="entry name" value="7tm_3"/>
    <property type="match status" value="1"/>
</dbReference>
<dbReference type="Pfam" id="PF01094">
    <property type="entry name" value="ANF_receptor"/>
    <property type="match status" value="1"/>
</dbReference>
<dbReference type="Pfam" id="PF07562">
    <property type="entry name" value="NCD3G"/>
    <property type="match status" value="1"/>
</dbReference>
<dbReference type="PRINTS" id="PR00248">
    <property type="entry name" value="GPCRMGR"/>
</dbReference>
<dbReference type="PRINTS" id="PR01535">
    <property type="entry name" value="VOMERONASL2R"/>
</dbReference>
<dbReference type="SUPFAM" id="SSF53822">
    <property type="entry name" value="Periplasmic binding protein-like I"/>
    <property type="match status" value="1"/>
</dbReference>
<dbReference type="PROSITE" id="PS50259">
    <property type="entry name" value="G_PROTEIN_RECEP_F3_4"/>
    <property type="match status" value="1"/>
</dbReference>
<sequence length="888" mass="99778">MALLMTCFVIVFAASQPCQTPDDLVAAASPGHIMIGGLFAIHEKILSSEEPRKPEIQKCASFEIPTFLQTLAMIHSIEMINNSTLLSGVKLGYEIYDTCTDITVAMAAALRCVSKFNSSREIVEFKCDYSNYVPRVKAVIGAGYSEISMAVSRTLSLQLMPQVSYESTAETLSDKIQFPSFLRSVSSDFYQTKAMAHLIQKSGWIIGILTTDDDYGLNTLAVQTAANNVCIAFREALPAFRSDITIEVRINQTLERTIAEAKVNVIVVFLSQFHVFNLFSKAIERNINKIWIVSSWSTSTIATIPDVKRIGKVVGFTFRRGNVSSFQSFLQNLCVFPSDNNKPLNEHAMLSACAHAKDSDLSQCVSNCSQGTLATKDSERNFFLRTDFLWDYTELGLVHSIQLAVLALSYAIQDLQADFQPWELLAVLKNVTFMEGWSSFHFYAHGAMNTGYNIVLWREINGHMSIKMAQYDLKNDVFIVTNQETKNEHRNLKKIQSKFFKECSSGQMKKTTKSQHTCCYECVTCPENHYSNQTDTDHYLLYNNETHWAPVGSTMCFEKEMEYLDSLAILLLALSLLGILFVLAIGIIFTRNLNTPVVKSSGELMVRYVILFCHFLNFAGTGFFIREPQSFTCKTRQTLICMSFTLCISYILMKSLKILLAFSSKLQNFLKCFYKPIPIIFTCTGIVVVCTLLIFAAPAVGQNVSLPRVIIFECEEGSILAFGSMLGYAAILAFMCFICAFKGRKFPENYNEAKFITFGMLIYFIAWITFIPIYTFGKYMLVVEIIIILISNYGICCMFFPKCYVILSKQETNTKSVFLKMIYSYSPHSAGSLAMSHSNITITNRTSAGGSAVQQKSRDLQLQGFAHICRENAMCRTKALPPKRISSI</sequence>
<comment type="function">
    <text evidence="1">Receptor activated by multiple ligands, including osteocalcin (BGLAP), basic amino acids, and various cations. Activated by amino acids with a preference for basic amino acids such as L-Lys, L-Arg and L-ornithine but also by small and polar amino acids. The L-alpha amino acids respond is augmented by divalent cations Ca(2+) and Mg(2+). Seems to act through a G(q)/G(11) and G(i)-coupled pathway. Regulates testosterone production by acting as a ligand for uncarboxylated osteocalcin hormone: osteocalcin-binding at the surface of Leydig cells initiates a signaling response that promotes the expression of enzymes required for testosterone synthesis in a CREB-dependent manner. Mediates the non-genomic effects of androgens in multiple tissue. May coordinate nutritional and hormonal anabolic signals through the sensing of extracellular amino acids, osteocalcin, divalent ions and its responsiveness to anabolic steroids.</text>
</comment>
<comment type="subunit">
    <text evidence="1">Homodimer; disulfide-linked.</text>
</comment>
<comment type="subcellular location">
    <subcellularLocation>
        <location evidence="1">Cell membrane</location>
        <topology evidence="1">Multi-pass membrane protein</topology>
    </subcellularLocation>
</comment>
<comment type="similarity">
    <text evidence="4">Belongs to the G-protein coupled receptor 3 family.</text>
</comment>
<evidence type="ECO:0000250" key="1">
    <source>
        <dbReference type="UniProtKB" id="Q8K4Z6"/>
    </source>
</evidence>
<evidence type="ECO:0000255" key="2"/>
<evidence type="ECO:0000255" key="3">
    <source>
        <dbReference type="PROSITE-ProRule" id="PRU00114"/>
    </source>
</evidence>
<evidence type="ECO:0000305" key="4"/>
<keyword id="KW-1003">Cell membrane</keyword>
<keyword id="KW-1015">Disulfide bond</keyword>
<keyword id="KW-0297">G-protein coupled receptor</keyword>
<keyword id="KW-0325">Glycoprotein</keyword>
<keyword id="KW-0472">Membrane</keyword>
<keyword id="KW-0675">Receptor</keyword>
<keyword id="KW-1185">Reference proteome</keyword>
<keyword id="KW-0732">Signal</keyword>
<keyword id="KW-0807">Transducer</keyword>
<keyword id="KW-0812">Transmembrane</keyword>
<keyword id="KW-1133">Transmembrane helix</keyword>
<reference key="1">
    <citation type="journal article" date="2009" name="Science">
        <title>The genome sequence of taurine cattle: a window to ruminant biology and evolution.</title>
        <authorList>
            <consortium name="The bovine genome sequencing and analysis consortium"/>
        </authorList>
    </citation>
    <scope>NUCLEOTIDE SEQUENCE [LARGE SCALE GENOMIC DNA]</scope>
</reference>
<proteinExistence type="inferred from homology"/>